<evidence type="ECO:0000250" key="1">
    <source>
        <dbReference type="UniProtKB" id="P13569"/>
    </source>
</evidence>
<evidence type="ECO:0000250" key="2">
    <source>
        <dbReference type="UniProtKB" id="P26361"/>
    </source>
</evidence>
<evidence type="ECO:0000250" key="3">
    <source>
        <dbReference type="UniProtKB" id="P34158"/>
    </source>
</evidence>
<evidence type="ECO:0000255" key="4"/>
<evidence type="ECO:0000255" key="5">
    <source>
        <dbReference type="PROSITE-ProRule" id="PRU00434"/>
    </source>
</evidence>
<evidence type="ECO:0000255" key="6">
    <source>
        <dbReference type="PROSITE-ProRule" id="PRU00441"/>
    </source>
</evidence>
<evidence type="ECO:0000305" key="7"/>
<protein>
    <recommendedName>
        <fullName evidence="1">Cystic fibrosis transmembrane conductance regulator</fullName>
        <shortName>CFTR</shortName>
    </recommendedName>
    <alternativeName>
        <fullName>ATP-binding cassette sub-family C member 7</fullName>
    </alternativeName>
    <alternativeName>
        <fullName>Channel conductance-controlling ATPase</fullName>
        <ecNumber evidence="1">5.6.1.6</ecNumber>
    </alternativeName>
    <alternativeName>
        <fullName>cAMP-dependent chloride channel</fullName>
    </alternativeName>
</protein>
<proteinExistence type="inferred from homology"/>
<accession>Q2QL74</accession>
<sequence length="1482" mass="168953">MQRSPLEKANFLSKLFFSWTRPILRKGFRQRLELSDIYQIPLSNSADYLSENLEREWDRELASKKKPKLINALRRCFFWRFVFHGIILYLGEVTKAVQPLLLGRIIASYDPDNKVERSIAIYLGIGLCLLFIVRTLLLHPAIFGLHHMGMQMRIALFSLIYKKTLKLSSRVLDKISTGQLISLLSNNLNKFDEGLALAHFVWIVPLQVVLLMGLLWDLLQASAFCGLAFLIVLALFQAWLGQMMMKYRERRAGKINERLVITSEMIDNIQSVKAYCWEEAMEKMIENLRETELKLTRKTAYVRYFNSSAFFFSGFFVVFLAVLPYALIKGIILRKIFTTISFCIVLRMAVTRQFPWAVQTWYDSLGAINKIQDFLQKEEYKTLEYNLTTTDVVMENITAFWDEGFGELFVKAKQNNSDVKMSNGDNGLFFSNFSLLGTPVLKNISFKIEKGQLLAVAGSTGAGKTSLLMMIMGELEPSEGKIKHSGRISFCSQFSWIMPGTIKENIIFGVSYDEYRYRSVIKACQLEEDISKFAEKDNTVLGEGGITLSGGQRARISLARAIYKDADLYLLDSPFGYLDVLTEKEIFESCVCKLMANKTRILITSKMEHLKKADKILILHEGSCYFYGAFSELQNLRPDFSSKLMGYDSFDQFSAERRSSILTETLRRFSIEGDTAVSWNEGKKQSFKQTGDFGERRKNSILNPLNSIRKFSVVQKGQPQMNGIEENDDEPLERRLSLVPDSEQGEAILPRSNIINTGPTFQGRNRRQSVLNLMTRPSISQGQNMFKTGNAARKMSMAPQSKLSEIDIYSRRLSQDSGMDISDEINEEDLKEWFFDDVENIPAVTTWNTYLRYITIHKNLVFVLIWCLVIFLVEVAASLVGLWLLEDISFKDKTNGTNGANNTFPVIITDTSKYYLFYIYVGIADTFFALGIFRGLPLVHTLISVSKILHHKMLYSVLKAPMSTFNTLKPGGILNRFSKDIAILDDLLPLTIFDFIQLILIVVGALIVVSAIRPYIFLATVPVIIAFIMLRAYFLQTSQQLKQLESEARTPIFTHLVTSLKGLWTLRAFGRQPYFETLFHKALNLHTASWFLYLSTLRWFQMRIELVFVIFFIAVTFISILTTGDGEGRVGILLTLAMNIMSTLQWAVNSSIDVDSLMRSVSRVFKFIDMPTEEPLPAKPTKSLKKNQLSQVLIIENEHVNKENNWPSGGQMIVKDLTAKYTDGGNAVLENISFSISPGQRVGLLGRTGSGKSTLLAAFLRLLNTEGEMQIDGVSWDSIPLQKWRKAFGVIPQKVFIFSGTFRKNLDPYGQWSDHELWKVADEVGLKSVIEQFPGKLDFVLVDGGYVLSHGHKQLICLARSVLSKAKILLLDEPSAHLDPITYQIIRRVLKNAFANCTVILSEHRIEAMLECQRFLVIEDNKVRQYESIQKLVNEKSLYRQAISHSDRMKLFPHRNSSRHKSLAKITALKEETEEEVQETRL</sequence>
<reference key="1">
    <citation type="submission" date="2005-11" db="EMBL/GenBank/DDBJ databases">
        <title>NISC comparative sequencing initiative.</title>
        <authorList>
            <person name="Antonellis A."/>
            <person name="Ayele K."/>
            <person name="Benjamin B."/>
            <person name="Blakesley R.W."/>
            <person name="Boakye A."/>
            <person name="Bouffard G.G."/>
            <person name="Brinkley C."/>
            <person name="Brooks S."/>
            <person name="Chu G."/>
            <person name="Coleman H."/>
            <person name="Engle J."/>
            <person name="Gestole M."/>
            <person name="Greene A."/>
            <person name="Guan X."/>
            <person name="Gupta J."/>
            <person name="Haghighi P."/>
            <person name="Han J."/>
            <person name="Hansen N."/>
            <person name="Ho S.-L."/>
            <person name="Hu P."/>
            <person name="Hunter G."/>
            <person name="Hurle B."/>
            <person name="Idol J.R."/>
            <person name="Kwong P."/>
            <person name="Laric P."/>
            <person name="Larson S."/>
            <person name="Lee-Lin S.-Q."/>
            <person name="Legaspi R."/>
            <person name="Madden M."/>
            <person name="Maduro Q.L."/>
            <person name="Maduro V.B."/>
            <person name="Margulies E.H."/>
            <person name="Masiello C."/>
            <person name="Maskeri B."/>
            <person name="McDowell J."/>
            <person name="Mojidi H.A."/>
            <person name="Mullikin J.C."/>
            <person name="Oestreicher J.S."/>
            <person name="Park M."/>
            <person name="Portnoy M.E."/>
            <person name="Prasad A."/>
            <person name="Puri O."/>
            <person name="Reddix-Dugue N."/>
            <person name="Schandler K."/>
            <person name="Schueler M.G."/>
            <person name="Sison C."/>
            <person name="Stantripop S."/>
            <person name="Stephen E."/>
            <person name="Taye A."/>
            <person name="Thomas J.W."/>
            <person name="Thomas P.J."/>
            <person name="Tsipouri V."/>
            <person name="Ung L."/>
            <person name="Vogt J.L."/>
            <person name="Wetherby K.D."/>
            <person name="Young A."/>
            <person name="Green E.D."/>
        </authorList>
    </citation>
    <scope>NUCLEOTIDE SEQUENCE [LARGE SCALE GENOMIC DNA]</scope>
</reference>
<name>CFTR_DIDVI</name>
<comment type="function">
    <text evidence="1 2">Epithelial ion channel that plays an important role in the regulation of epithelial ion and water transport and fluid homeostasis. Mediates the transport of chloride ions across the cell membrane (By similarity). Possesses an intrinsic ATPase activity and utilizes ATP to gate its channel; the passive flow of anions through the channel is gated by cycles of ATP binding and hydrolysis by the ATP-binding domains (By similarity). The ion channel is also permeable to HCO(3)(-); selectivity depends on the extracellular chloride concentration. Exerts its function also by modulating the activity of other ion channels and transporters. Contributes to the regulation of the pH and the ion content of the epithelial fluid layer. Modulates the activity of the epithelial sodium channel (ENaC) complex, in part by regulating the cell surface expression of the ENaC complex. May regulate bicarbonate secretion and salvage in epithelial cells by regulating the transporter SLC4A7. Can inhibit the chloride channel activity of ANO1 (By similarity). Plays a role in the chloride and bicarbonate homeostasis during sperm epididymal maturation and capacitation (By similarity).</text>
</comment>
<comment type="catalytic activity">
    <reaction evidence="1">
        <text>ATP + H2O + closed Cl(-) channel = ADP + phosphate + open Cl(-) channel.</text>
        <dbReference type="EC" id="5.6.1.6"/>
    </reaction>
</comment>
<comment type="catalytic activity">
    <reaction evidence="1">
        <text>chloride(in) = chloride(out)</text>
        <dbReference type="Rhea" id="RHEA:29823"/>
        <dbReference type="ChEBI" id="CHEBI:17996"/>
    </reaction>
</comment>
<comment type="catalytic activity">
    <reaction evidence="1">
        <text>hydrogencarbonate(in) = hydrogencarbonate(out)</text>
        <dbReference type="Rhea" id="RHEA:28695"/>
        <dbReference type="ChEBI" id="CHEBI:17544"/>
    </reaction>
</comment>
<comment type="catalytic activity">
    <reaction evidence="1">
        <text>ATP + H2O = ADP + phosphate + H(+)</text>
        <dbReference type="Rhea" id="RHEA:13065"/>
        <dbReference type="ChEBI" id="CHEBI:15377"/>
        <dbReference type="ChEBI" id="CHEBI:15378"/>
        <dbReference type="ChEBI" id="CHEBI:30616"/>
        <dbReference type="ChEBI" id="CHEBI:43474"/>
        <dbReference type="ChEBI" id="CHEBI:456216"/>
    </reaction>
    <physiologicalReaction direction="left-to-right" evidence="1">
        <dbReference type="Rhea" id="RHEA:13066"/>
    </physiologicalReaction>
</comment>
<comment type="subunit">
    <text evidence="1 2 3">Monomer; does not require oligomerization for channel activity. May form oligomers in the membrane (By similarity). Interacts with SLC26A3, SLC26A6 and NHERF1 (By similarity). Interacts with SHANK2 (By similarity). Interacts with MYO6 (By similarity). Interacts (via C-terminus) with GOPC (via PDZ domain); this promotes CFTR internalization and thereby decreases channel activity. Interacts with SLC4A7 through NHERF1. Found in a complex with MYO5B and RAB11A. Interacts with ANO1. Interacts with SLC26A8 (By similarity). Interacts with AHCYL1; the interaction increases CFTR activity (By similarity). Interacts with CSE1L (By similarity). The core-glycosylated form interacts with GORASP2 (via PDZ GRASP-type 1 domain) in respone to ER stress (By similarity). Interacts with MARCHF2; the interaction leads to CFTR ubiqtuitination and degradation (By similarity). Interacts with ADGRG2 (By similarity).</text>
</comment>
<comment type="subcellular location">
    <subcellularLocation>
        <location evidence="2">Apical cell membrane</location>
        <topology evidence="1">Multi-pass membrane protein</topology>
    </subcellularLocation>
    <subcellularLocation>
        <location evidence="1">Early endosome membrane</location>
        <topology evidence="1">Multi-pass membrane protein</topology>
    </subcellularLocation>
    <subcellularLocation>
        <location evidence="2">Cell membrane</location>
        <topology evidence="1">Multi-pass membrane protein</topology>
    </subcellularLocation>
    <subcellularLocation>
        <location evidence="1">Recycling endosome membrane</location>
        <topology evidence="1">Multi-pass membrane protein</topology>
    </subcellularLocation>
    <subcellularLocation>
        <location evidence="1">Endoplasmic reticulum membrane</location>
        <topology evidence="1">Multi-pass membrane protein</topology>
    </subcellularLocation>
    <subcellularLocation>
        <location evidence="3">Nucleus</location>
    </subcellularLocation>
    <text evidence="1 3">The channel is internalized from the cell surface into an endosomal recycling compartment, from where it is recycled to the cell membrane. In the oviduct and bronchus, detected on the apical side of epithelial cells, but not associated with cilia. In Sertoli cells, a processed product is detected in the nucleus. ER stress induces GORASP2-mediated unconventional (ER/Golgi-independent) trafficking of core-glycosylated CFTR to cell membrane.</text>
</comment>
<comment type="domain">
    <text evidence="1 2">Binds and hydrolyzes ATP via the two cytoplasmic ABC transporter nucleotide-binding domains. The two ATP-binding domains interact with each other, forming a head-to-tail dimer. Normal ATPase activity requires interaction between the two domains. The first ABC transporter nucleotide-binding domain has no ATPase activity by itself.</text>
</comment>
<comment type="domain">
    <text evidence="1">The PDZ-binding motif mediates interactions with GOPC and with the SLC4A7, NHERF1/EBP50 complex.</text>
</comment>
<comment type="domain">
    <text evidence="1">The disordered R region mediates channel activation when it is phosphorylated, but not in the absence of phosphorylation.</text>
</comment>
<comment type="PTM">
    <text evidence="1">N-glycosylated.</text>
</comment>
<comment type="PTM">
    <text evidence="1">Phosphorylated; cAMP treatment promotes phosphorylation and activates the channel. Dephosphorylation decreases the ATPase activity (in vitro). Phosphorylation at PKA sites activates the channel. Phosphorylation at PKC sites enhances the response to phosphorylation by PKA. Phosphorylated by AMPK; this inhibits channel activity.</text>
</comment>
<comment type="PTM">
    <text evidence="1">Ubiquitinated, leading to its degradation in the lysosome. Deubiquitination by USP10 in early endosomes enhances its endocytic recycling to the cell membrane. Ubiquitinated by RNF185 during ER stress. Ubiquitinated by MARCHF2 (By similarity).</text>
</comment>
<comment type="similarity">
    <text evidence="7">Belongs to the ABC transporter superfamily. ABCC family. CFTR transporter (TC 3.A.1.202) subfamily.</text>
</comment>
<organism>
    <name type="scientific">Didelphis virginiana</name>
    <name type="common">North American opossum</name>
    <name type="synonym">Didelphis marsupialis virginiana</name>
    <dbReference type="NCBI Taxonomy" id="9267"/>
    <lineage>
        <taxon>Eukaryota</taxon>
        <taxon>Metazoa</taxon>
        <taxon>Chordata</taxon>
        <taxon>Craniata</taxon>
        <taxon>Vertebrata</taxon>
        <taxon>Euteleostomi</taxon>
        <taxon>Mammalia</taxon>
        <taxon>Metatheria</taxon>
        <taxon>Didelphimorphia</taxon>
        <taxon>Didelphidae</taxon>
        <taxon>Didelphis</taxon>
    </lineage>
</organism>
<keyword id="KW-0067">ATP-binding</keyword>
<keyword id="KW-1003">Cell membrane</keyword>
<keyword id="KW-0868">Chloride</keyword>
<keyword id="KW-0869">Chloride channel</keyword>
<keyword id="KW-0256">Endoplasmic reticulum</keyword>
<keyword id="KW-0967">Endosome</keyword>
<keyword id="KW-0325">Glycoprotein</keyword>
<keyword id="KW-0407">Ion channel</keyword>
<keyword id="KW-0406">Ion transport</keyword>
<keyword id="KW-0413">Isomerase</keyword>
<keyword id="KW-1017">Isopeptide bond</keyword>
<keyword id="KW-0449">Lipoprotein</keyword>
<keyword id="KW-0472">Membrane</keyword>
<keyword id="KW-0547">Nucleotide-binding</keyword>
<keyword id="KW-0539">Nucleus</keyword>
<keyword id="KW-0564">Palmitate</keyword>
<keyword id="KW-0597">Phosphoprotein</keyword>
<keyword id="KW-0677">Repeat</keyword>
<keyword id="KW-0812">Transmembrane</keyword>
<keyword id="KW-1133">Transmembrane helix</keyword>
<keyword id="KW-0813">Transport</keyword>
<keyword id="KW-0832">Ubl conjugation</keyword>
<feature type="chain" id="PRO_0000226366" description="Cystic fibrosis transmembrane conductance regulator">
    <location>
        <begin position="1"/>
        <end position="1482"/>
    </location>
</feature>
<feature type="topological domain" description="Cytoplasmic" evidence="1">
    <location>
        <begin position="1"/>
        <end position="77"/>
    </location>
</feature>
<feature type="transmembrane region" description="Helical; Name=1" evidence="1">
    <location>
        <begin position="78"/>
        <end position="98"/>
    </location>
</feature>
<feature type="topological domain" description="Extracellular" evidence="1">
    <location>
        <begin position="99"/>
        <end position="122"/>
    </location>
</feature>
<feature type="transmembrane region" description="Helical; Name=2" evidence="1">
    <location>
        <begin position="123"/>
        <end position="146"/>
    </location>
</feature>
<feature type="topological domain" description="Cytoplasmic" evidence="1">
    <location>
        <begin position="147"/>
        <end position="195"/>
    </location>
</feature>
<feature type="transmembrane region" description="Helical; Name=3" evidence="1">
    <location>
        <begin position="196"/>
        <end position="216"/>
    </location>
</feature>
<feature type="topological domain" description="Extracellular" evidence="1">
    <location>
        <begin position="217"/>
        <end position="222"/>
    </location>
</feature>
<feature type="transmembrane region" description="Helical; Name=4" evidence="1">
    <location>
        <begin position="223"/>
        <end position="243"/>
    </location>
</feature>
<feature type="topological domain" description="Cytoplasmic" evidence="1">
    <location>
        <begin position="244"/>
        <end position="298"/>
    </location>
</feature>
<feature type="transmembrane region" description="Helical; Name=5" evidence="1">
    <location>
        <begin position="299"/>
        <end position="319"/>
    </location>
</feature>
<feature type="topological domain" description="Extracellular" evidence="1">
    <location>
        <begin position="320"/>
        <end position="339"/>
    </location>
</feature>
<feature type="transmembrane region" description="Helical; Name=6" evidence="1">
    <location>
        <begin position="340"/>
        <end position="358"/>
    </location>
</feature>
<feature type="topological domain" description="Cytoplasmic" evidence="1">
    <location>
        <begin position="359"/>
        <end position="859"/>
    </location>
</feature>
<feature type="transmembrane region" description="Helical; Name=7" evidence="1">
    <location>
        <begin position="860"/>
        <end position="880"/>
    </location>
</feature>
<feature type="topological domain" description="Extracellular" evidence="1">
    <location>
        <begin position="881"/>
        <end position="919"/>
    </location>
</feature>
<feature type="transmembrane region" description="Discontinuously helical; Name=8" evidence="1">
    <location>
        <begin position="920"/>
        <end position="940"/>
    </location>
</feature>
<feature type="topological domain" description="Cytoplasmic" evidence="1">
    <location>
        <begin position="941"/>
        <end position="991"/>
    </location>
</feature>
<feature type="transmembrane region" description="Helical; Name=9" evidence="1">
    <location>
        <begin position="992"/>
        <end position="1012"/>
    </location>
</feature>
<feature type="topological domain" description="Extracellular" evidence="1">
    <location>
        <begin position="1013"/>
        <end position="1014"/>
    </location>
</feature>
<feature type="transmembrane region" description="Helical; Name=10" evidence="1">
    <location>
        <begin position="1015"/>
        <end position="1035"/>
    </location>
</feature>
<feature type="topological domain" description="Cytoplasmic" evidence="1">
    <location>
        <begin position="1036"/>
        <end position="1096"/>
    </location>
</feature>
<feature type="transmembrane region" description="Helical; Name=11" evidence="1">
    <location>
        <begin position="1097"/>
        <end position="1117"/>
    </location>
</feature>
<feature type="topological domain" description="Extracellular" evidence="1">
    <location>
        <begin position="1118"/>
        <end position="1131"/>
    </location>
</feature>
<feature type="transmembrane region" description="Helical; Name=12" evidence="1">
    <location>
        <begin position="1132"/>
        <end position="1152"/>
    </location>
</feature>
<feature type="topological domain" description="Cytoplasmic" evidence="1">
    <location>
        <begin position="1153"/>
        <end position="1482"/>
    </location>
</feature>
<feature type="domain" description="ABC transmembrane type-1 1" evidence="6">
    <location>
        <begin position="81"/>
        <end position="365"/>
    </location>
</feature>
<feature type="domain" description="ABC transporter 1" evidence="5">
    <location>
        <begin position="423"/>
        <end position="646"/>
    </location>
</feature>
<feature type="domain" description="ABC transmembrane type-1 2" evidence="6">
    <location>
        <begin position="860"/>
        <end position="1156"/>
    </location>
</feature>
<feature type="domain" description="ABC transporter 2" evidence="5">
    <location>
        <begin position="1212"/>
        <end position="1445"/>
    </location>
</feature>
<feature type="region of interest" description="Disordered R region" evidence="1">
    <location>
        <begin position="654"/>
        <end position="832"/>
    </location>
</feature>
<feature type="region of interest" description="Interaction with GORASP2" evidence="1">
    <location>
        <begin position="1388"/>
        <end position="1482"/>
    </location>
</feature>
<feature type="short sequence motif" description="PDZ-binding" evidence="1">
    <location>
        <begin position="1480"/>
        <end position="1482"/>
    </location>
</feature>
<feature type="binding site" evidence="1">
    <location>
        <position position="401"/>
    </location>
    <ligand>
        <name>ATP</name>
        <dbReference type="ChEBI" id="CHEBI:30616"/>
        <label>1</label>
    </ligand>
</feature>
<feature type="binding site" evidence="1">
    <location>
        <position position="434"/>
    </location>
    <ligand>
        <name>ATP</name>
        <dbReference type="ChEBI" id="CHEBI:30616"/>
        <label>1</label>
    </ligand>
</feature>
<feature type="binding site" evidence="5">
    <location>
        <begin position="458"/>
        <end position="465"/>
    </location>
    <ligand>
        <name>ATP</name>
        <dbReference type="ChEBI" id="CHEBI:30616"/>
        <label>1</label>
    </ligand>
</feature>
<feature type="binding site" evidence="2">
    <location>
        <position position="493"/>
    </location>
    <ligand>
        <name>ATP</name>
        <dbReference type="ChEBI" id="CHEBI:30616"/>
        <label>1</label>
    </ligand>
</feature>
<feature type="binding site" evidence="1">
    <location>
        <position position="1221"/>
    </location>
    <ligand>
        <name>ATP</name>
        <dbReference type="ChEBI" id="CHEBI:30616"/>
        <label>2</label>
    </ligand>
</feature>
<feature type="binding site" evidence="5">
    <location>
        <begin position="1246"/>
        <end position="1253"/>
    </location>
    <ligand>
        <name>ATP</name>
        <dbReference type="ChEBI" id="CHEBI:30616"/>
        <label>2</label>
    </ligand>
</feature>
<feature type="modified residue" description="Phosphoserine" evidence="1">
    <location>
        <position position="549"/>
    </location>
</feature>
<feature type="modified residue" description="Phosphoserine" evidence="1">
    <location>
        <position position="660"/>
    </location>
</feature>
<feature type="modified residue" description="Phosphoserine; by PKA" evidence="1">
    <location>
        <position position="670"/>
    </location>
</feature>
<feature type="modified residue" description="Phosphoserine" evidence="1">
    <location>
        <position position="686"/>
    </location>
</feature>
<feature type="modified residue" description="Phosphoserine" evidence="1">
    <location>
        <position position="700"/>
    </location>
</feature>
<feature type="modified residue" description="Phosphoserine" evidence="1">
    <location>
        <position position="712"/>
    </location>
</feature>
<feature type="modified residue" description="Phosphoserine" evidence="1">
    <location>
        <position position="737"/>
    </location>
</feature>
<feature type="modified residue" description="Phosphoserine" evidence="1">
    <location>
        <position position="769"/>
    </location>
</feature>
<feature type="modified residue" description="Phosphoserine" evidence="1">
    <location>
        <position position="796"/>
    </location>
</feature>
<feature type="modified residue" description="Phosphoserine" evidence="1">
    <location>
        <position position="814"/>
    </location>
</feature>
<feature type="modified residue" description="Phosphoserine" evidence="1">
    <location>
        <position position="1446"/>
    </location>
</feature>
<feature type="modified residue" description="Phosphoserine" evidence="1">
    <location>
        <position position="1458"/>
    </location>
</feature>
<feature type="lipid moiety-binding region" description="S-palmitoyl cysteine" evidence="1">
    <location>
        <position position="524"/>
    </location>
</feature>
<feature type="lipid moiety-binding region" description="S-palmitoyl cysteine" evidence="1">
    <location>
        <position position="1397"/>
    </location>
</feature>
<feature type="glycosylation site" description="N-linked (GlcNAc...) asparagine" evidence="4">
    <location>
        <position position="895"/>
    </location>
</feature>
<feature type="glycosylation site" description="N-linked (GlcNAc...) asparagine" evidence="4">
    <location>
        <position position="901"/>
    </location>
</feature>
<feature type="cross-link" description="Glycyl lysine isopeptide (Lys-Gly) (interchain with G-Cter in ubiquitin)" evidence="1">
    <location>
        <position position="688"/>
    </location>
</feature>
<dbReference type="EC" id="5.6.1.6" evidence="1"/>
<dbReference type="EMBL" id="DP000023">
    <property type="protein sequence ID" value="ABB89835.1"/>
    <property type="molecule type" value="Genomic_DNA"/>
</dbReference>
<dbReference type="SMR" id="Q2QL74"/>
<dbReference type="GlyCosmos" id="Q2QL74">
    <property type="glycosylation" value="2 sites, No reported glycans"/>
</dbReference>
<dbReference type="GO" id="GO:0016324">
    <property type="term" value="C:apical plasma membrane"/>
    <property type="evidence" value="ECO:0000250"/>
    <property type="project" value="UniProtKB"/>
</dbReference>
<dbReference type="GO" id="GO:0034707">
    <property type="term" value="C:chloride channel complex"/>
    <property type="evidence" value="ECO:0007669"/>
    <property type="project" value="UniProtKB-KW"/>
</dbReference>
<dbReference type="GO" id="GO:0005829">
    <property type="term" value="C:cytosol"/>
    <property type="evidence" value="ECO:0007669"/>
    <property type="project" value="TreeGrafter"/>
</dbReference>
<dbReference type="GO" id="GO:0005769">
    <property type="term" value="C:early endosome"/>
    <property type="evidence" value="ECO:0000250"/>
    <property type="project" value="UniProtKB"/>
</dbReference>
<dbReference type="GO" id="GO:0031901">
    <property type="term" value="C:early endosome membrane"/>
    <property type="evidence" value="ECO:0007669"/>
    <property type="project" value="UniProtKB-SubCell"/>
</dbReference>
<dbReference type="GO" id="GO:0005789">
    <property type="term" value="C:endoplasmic reticulum membrane"/>
    <property type="evidence" value="ECO:0000250"/>
    <property type="project" value="UniProtKB"/>
</dbReference>
<dbReference type="GO" id="GO:0016020">
    <property type="term" value="C:membrane"/>
    <property type="evidence" value="ECO:0000250"/>
    <property type="project" value="UniProtKB"/>
</dbReference>
<dbReference type="GO" id="GO:0005634">
    <property type="term" value="C:nucleus"/>
    <property type="evidence" value="ECO:0000250"/>
    <property type="project" value="UniProtKB"/>
</dbReference>
<dbReference type="GO" id="GO:0005886">
    <property type="term" value="C:plasma membrane"/>
    <property type="evidence" value="ECO:0000250"/>
    <property type="project" value="UniProtKB"/>
</dbReference>
<dbReference type="GO" id="GO:0055038">
    <property type="term" value="C:recycling endosome membrane"/>
    <property type="evidence" value="ECO:0007669"/>
    <property type="project" value="UniProtKB-SubCell"/>
</dbReference>
<dbReference type="GO" id="GO:0140359">
    <property type="term" value="F:ABC-type transporter activity"/>
    <property type="evidence" value="ECO:0007669"/>
    <property type="project" value="InterPro"/>
</dbReference>
<dbReference type="GO" id="GO:0005524">
    <property type="term" value="F:ATP binding"/>
    <property type="evidence" value="ECO:0007669"/>
    <property type="project" value="UniProtKB-KW"/>
</dbReference>
<dbReference type="GO" id="GO:0016887">
    <property type="term" value="F:ATP hydrolysis activity"/>
    <property type="evidence" value="ECO:0000250"/>
    <property type="project" value="UniProtKB"/>
</dbReference>
<dbReference type="GO" id="GO:0015106">
    <property type="term" value="F:bicarbonate transmembrane transporter activity"/>
    <property type="evidence" value="ECO:0000250"/>
    <property type="project" value="UniProtKB"/>
</dbReference>
<dbReference type="GO" id="GO:0005254">
    <property type="term" value="F:chloride channel activity"/>
    <property type="evidence" value="ECO:0000250"/>
    <property type="project" value="UniProtKB"/>
</dbReference>
<dbReference type="GO" id="GO:0019869">
    <property type="term" value="F:chloride channel inhibitor activity"/>
    <property type="evidence" value="ECO:0000250"/>
    <property type="project" value="UniProtKB"/>
</dbReference>
<dbReference type="GO" id="GO:0015108">
    <property type="term" value="F:chloride transmembrane transporter activity"/>
    <property type="evidence" value="ECO:0000250"/>
    <property type="project" value="UniProtKB"/>
</dbReference>
<dbReference type="GO" id="GO:0005260">
    <property type="term" value="F:intracellularly ATP-gated chloride channel activity"/>
    <property type="evidence" value="ECO:0000250"/>
    <property type="project" value="UniProtKB"/>
</dbReference>
<dbReference type="GO" id="GO:0015701">
    <property type="term" value="P:bicarbonate transport"/>
    <property type="evidence" value="ECO:0000250"/>
    <property type="project" value="UniProtKB"/>
</dbReference>
<dbReference type="GO" id="GO:0071320">
    <property type="term" value="P:cellular response to cAMP"/>
    <property type="evidence" value="ECO:0000250"/>
    <property type="project" value="UniProtKB"/>
</dbReference>
<dbReference type="GO" id="GO:1904322">
    <property type="term" value="P:cellular response to forskolin"/>
    <property type="evidence" value="ECO:0000250"/>
    <property type="project" value="UniProtKB"/>
</dbReference>
<dbReference type="GO" id="GO:1902476">
    <property type="term" value="P:chloride transmembrane transport"/>
    <property type="evidence" value="ECO:0000250"/>
    <property type="project" value="UniProtKB"/>
</dbReference>
<dbReference type="GO" id="GO:0051454">
    <property type="term" value="P:intracellular pH elevation"/>
    <property type="evidence" value="ECO:0000250"/>
    <property type="project" value="UniProtKB"/>
</dbReference>
<dbReference type="GO" id="GO:0060081">
    <property type="term" value="P:membrane hyperpolarization"/>
    <property type="evidence" value="ECO:0000250"/>
    <property type="project" value="UniProtKB"/>
</dbReference>
<dbReference type="GO" id="GO:0050891">
    <property type="term" value="P:multicellular organismal-level water homeostasis"/>
    <property type="evidence" value="ECO:0000250"/>
    <property type="project" value="UniProtKB"/>
</dbReference>
<dbReference type="GO" id="GO:0034976">
    <property type="term" value="P:response to endoplasmic reticulum stress"/>
    <property type="evidence" value="ECO:0000250"/>
    <property type="project" value="UniProtKB"/>
</dbReference>
<dbReference type="GO" id="GO:0048240">
    <property type="term" value="P:sperm capacitation"/>
    <property type="evidence" value="ECO:0000250"/>
    <property type="project" value="UniProtKB"/>
</dbReference>
<dbReference type="GO" id="GO:0035377">
    <property type="term" value="P:transepithelial water transport"/>
    <property type="evidence" value="ECO:0000250"/>
    <property type="project" value="UniProtKB"/>
</dbReference>
<dbReference type="CDD" id="cd18594">
    <property type="entry name" value="ABC_6TM_CFTR_D1"/>
    <property type="match status" value="1"/>
</dbReference>
<dbReference type="CDD" id="cd18600">
    <property type="entry name" value="ABC_6TM_CFTR_D2"/>
    <property type="match status" value="1"/>
</dbReference>
<dbReference type="CDD" id="cd03291">
    <property type="entry name" value="ABCC_CFTR1"/>
    <property type="match status" value="1"/>
</dbReference>
<dbReference type="CDD" id="cd03289">
    <property type="entry name" value="ABCC_CFTR2"/>
    <property type="match status" value="1"/>
</dbReference>
<dbReference type="FunFam" id="1.20.1560.10:FF:000017">
    <property type="entry name" value="Cystic fibrosis transmembrane conductance regulator"/>
    <property type="match status" value="1"/>
</dbReference>
<dbReference type="FunFam" id="1.20.1560.10:FF:000019">
    <property type="entry name" value="Cystic fibrosis transmembrane conductance regulator"/>
    <property type="match status" value="1"/>
</dbReference>
<dbReference type="FunFam" id="3.40.50.300:FF:000581">
    <property type="entry name" value="Cystic fibrosis transmembrane conductance regulator"/>
    <property type="match status" value="1"/>
</dbReference>
<dbReference type="FunFam" id="3.40.50.300:FF:000591">
    <property type="entry name" value="Cystic fibrosis transmembrane conductance regulator"/>
    <property type="match status" value="1"/>
</dbReference>
<dbReference type="Gene3D" id="1.20.1560.10">
    <property type="entry name" value="ABC transporter type 1, transmembrane domain"/>
    <property type="match status" value="2"/>
</dbReference>
<dbReference type="Gene3D" id="3.40.50.300">
    <property type="entry name" value="P-loop containing nucleotide triphosphate hydrolases"/>
    <property type="match status" value="2"/>
</dbReference>
<dbReference type="InterPro" id="IPR003593">
    <property type="entry name" value="AAA+_ATPase"/>
</dbReference>
<dbReference type="InterPro" id="IPR011527">
    <property type="entry name" value="ABC1_TM_dom"/>
</dbReference>
<dbReference type="InterPro" id="IPR036640">
    <property type="entry name" value="ABC1_TM_sf"/>
</dbReference>
<dbReference type="InterPro" id="IPR003439">
    <property type="entry name" value="ABC_transporter-like_ATP-bd"/>
</dbReference>
<dbReference type="InterPro" id="IPR017871">
    <property type="entry name" value="ABC_transporter-like_CS"/>
</dbReference>
<dbReference type="InterPro" id="IPR050173">
    <property type="entry name" value="ABC_transporter_C-like"/>
</dbReference>
<dbReference type="InterPro" id="IPR009147">
    <property type="entry name" value="CFTR/ABCC7"/>
</dbReference>
<dbReference type="InterPro" id="IPR047082">
    <property type="entry name" value="CFTR1_ATP-bd_dom1"/>
</dbReference>
<dbReference type="InterPro" id="IPR025837">
    <property type="entry name" value="CFTR_reg_dom"/>
</dbReference>
<dbReference type="InterPro" id="IPR027417">
    <property type="entry name" value="P-loop_NTPase"/>
</dbReference>
<dbReference type="NCBIfam" id="TIGR01271">
    <property type="entry name" value="CFTR_protein"/>
    <property type="match status" value="1"/>
</dbReference>
<dbReference type="PANTHER" id="PTHR24223">
    <property type="entry name" value="ATP-BINDING CASSETTE SUB-FAMILY C"/>
    <property type="match status" value="1"/>
</dbReference>
<dbReference type="PANTHER" id="PTHR24223:SF19">
    <property type="entry name" value="CYSTIC FIBROSIS TRANSMEMBRANE CONDUCTANCE REGULATOR"/>
    <property type="match status" value="1"/>
</dbReference>
<dbReference type="Pfam" id="PF00664">
    <property type="entry name" value="ABC_membrane"/>
    <property type="match status" value="2"/>
</dbReference>
<dbReference type="Pfam" id="PF00005">
    <property type="entry name" value="ABC_tran"/>
    <property type="match status" value="2"/>
</dbReference>
<dbReference type="Pfam" id="PF14396">
    <property type="entry name" value="CFTR_R"/>
    <property type="match status" value="1"/>
</dbReference>
<dbReference type="PRINTS" id="PR01851">
    <property type="entry name" value="CYSFIBREGLTR"/>
</dbReference>
<dbReference type="SMART" id="SM00382">
    <property type="entry name" value="AAA"/>
    <property type="match status" value="2"/>
</dbReference>
<dbReference type="SUPFAM" id="SSF90123">
    <property type="entry name" value="ABC transporter transmembrane region"/>
    <property type="match status" value="2"/>
</dbReference>
<dbReference type="SUPFAM" id="SSF52540">
    <property type="entry name" value="P-loop containing nucleoside triphosphate hydrolases"/>
    <property type="match status" value="2"/>
</dbReference>
<dbReference type="PROSITE" id="PS50929">
    <property type="entry name" value="ABC_TM1F"/>
    <property type="match status" value="2"/>
</dbReference>
<dbReference type="PROSITE" id="PS00211">
    <property type="entry name" value="ABC_TRANSPORTER_1"/>
    <property type="match status" value="1"/>
</dbReference>
<dbReference type="PROSITE" id="PS50893">
    <property type="entry name" value="ABC_TRANSPORTER_2"/>
    <property type="match status" value="2"/>
</dbReference>
<gene>
    <name evidence="1" type="primary">CFTR</name>
    <name type="synonym">ABCC7</name>
</gene>